<comment type="function">
    <text evidence="1">Specifically methylates guanosine-37 in various tRNAs.</text>
</comment>
<comment type="catalytic activity">
    <reaction evidence="1">
        <text>guanosine(37) in tRNA + S-adenosyl-L-methionine = N(1)-methylguanosine(37) in tRNA + S-adenosyl-L-homocysteine + H(+)</text>
        <dbReference type="Rhea" id="RHEA:36899"/>
        <dbReference type="Rhea" id="RHEA-COMP:10145"/>
        <dbReference type="Rhea" id="RHEA-COMP:10147"/>
        <dbReference type="ChEBI" id="CHEBI:15378"/>
        <dbReference type="ChEBI" id="CHEBI:57856"/>
        <dbReference type="ChEBI" id="CHEBI:59789"/>
        <dbReference type="ChEBI" id="CHEBI:73542"/>
        <dbReference type="ChEBI" id="CHEBI:74269"/>
        <dbReference type="EC" id="2.1.1.228"/>
    </reaction>
</comment>
<comment type="subunit">
    <text evidence="1">Homodimer.</text>
</comment>
<comment type="subcellular location">
    <subcellularLocation>
        <location evidence="1">Cytoplasm</location>
    </subcellularLocation>
</comment>
<comment type="similarity">
    <text evidence="1">Belongs to the RNA methyltransferase TrmD family.</text>
</comment>
<dbReference type="EC" id="2.1.1.228" evidence="1"/>
<dbReference type="EMBL" id="CP000828">
    <property type="protein sequence ID" value="ABW29088.1"/>
    <property type="molecule type" value="Genomic_DNA"/>
</dbReference>
<dbReference type="RefSeq" id="WP_012164433.1">
    <property type="nucleotide sequence ID" value="NC_009925.1"/>
</dbReference>
<dbReference type="SMR" id="B0CAM2"/>
<dbReference type="STRING" id="329726.AM1_4106"/>
<dbReference type="KEGG" id="amr:AM1_4106"/>
<dbReference type="eggNOG" id="COG0336">
    <property type="taxonomic scope" value="Bacteria"/>
</dbReference>
<dbReference type="HOGENOM" id="CLU_047363_0_1_3"/>
<dbReference type="OrthoDB" id="9807416at2"/>
<dbReference type="Proteomes" id="UP000000268">
    <property type="component" value="Chromosome"/>
</dbReference>
<dbReference type="GO" id="GO:0005829">
    <property type="term" value="C:cytosol"/>
    <property type="evidence" value="ECO:0007669"/>
    <property type="project" value="TreeGrafter"/>
</dbReference>
<dbReference type="GO" id="GO:0052906">
    <property type="term" value="F:tRNA (guanine(37)-N1)-methyltransferase activity"/>
    <property type="evidence" value="ECO:0007669"/>
    <property type="project" value="UniProtKB-UniRule"/>
</dbReference>
<dbReference type="GO" id="GO:0002939">
    <property type="term" value="P:tRNA N1-guanine methylation"/>
    <property type="evidence" value="ECO:0007669"/>
    <property type="project" value="TreeGrafter"/>
</dbReference>
<dbReference type="CDD" id="cd18080">
    <property type="entry name" value="TrmD-like"/>
    <property type="match status" value="1"/>
</dbReference>
<dbReference type="FunFam" id="3.40.1280.10:FF:000001">
    <property type="entry name" value="tRNA (guanine-N(1)-)-methyltransferase"/>
    <property type="match status" value="1"/>
</dbReference>
<dbReference type="Gene3D" id="3.40.1280.10">
    <property type="match status" value="1"/>
</dbReference>
<dbReference type="Gene3D" id="1.10.1270.20">
    <property type="entry name" value="tRNA(m1g37)methyltransferase, domain 2"/>
    <property type="match status" value="1"/>
</dbReference>
<dbReference type="HAMAP" id="MF_00605">
    <property type="entry name" value="TrmD"/>
    <property type="match status" value="1"/>
</dbReference>
<dbReference type="InterPro" id="IPR029028">
    <property type="entry name" value="Alpha/beta_knot_MTases"/>
</dbReference>
<dbReference type="InterPro" id="IPR023148">
    <property type="entry name" value="tRNA_m1G_MeTrfase_C_sf"/>
</dbReference>
<dbReference type="InterPro" id="IPR002649">
    <property type="entry name" value="tRNA_m1G_MeTrfase_TrmD"/>
</dbReference>
<dbReference type="InterPro" id="IPR029026">
    <property type="entry name" value="tRNA_m1G_MTases_N"/>
</dbReference>
<dbReference type="InterPro" id="IPR016009">
    <property type="entry name" value="tRNA_MeTrfase_TRMD/TRM10"/>
</dbReference>
<dbReference type="NCBIfam" id="NF000648">
    <property type="entry name" value="PRK00026.1"/>
    <property type="match status" value="1"/>
</dbReference>
<dbReference type="NCBIfam" id="TIGR00088">
    <property type="entry name" value="trmD"/>
    <property type="match status" value="1"/>
</dbReference>
<dbReference type="PANTHER" id="PTHR46417">
    <property type="entry name" value="TRNA (GUANINE-N(1)-)-METHYLTRANSFERASE"/>
    <property type="match status" value="1"/>
</dbReference>
<dbReference type="PANTHER" id="PTHR46417:SF1">
    <property type="entry name" value="TRNA (GUANINE-N(1)-)-METHYLTRANSFERASE"/>
    <property type="match status" value="1"/>
</dbReference>
<dbReference type="Pfam" id="PF01746">
    <property type="entry name" value="tRNA_m1G_MT"/>
    <property type="match status" value="1"/>
</dbReference>
<dbReference type="PIRSF" id="PIRSF000386">
    <property type="entry name" value="tRNA_mtase"/>
    <property type="match status" value="1"/>
</dbReference>
<dbReference type="SUPFAM" id="SSF75217">
    <property type="entry name" value="alpha/beta knot"/>
    <property type="match status" value="1"/>
</dbReference>
<feature type="chain" id="PRO_1000082504" description="tRNA (guanine-N(1)-)-methyltransferase">
    <location>
        <begin position="1"/>
        <end position="235"/>
    </location>
</feature>
<feature type="binding site" evidence="1">
    <location>
        <position position="112"/>
    </location>
    <ligand>
        <name>S-adenosyl-L-methionine</name>
        <dbReference type="ChEBI" id="CHEBI:59789"/>
    </ligand>
</feature>
<feature type="binding site" evidence="1">
    <location>
        <begin position="132"/>
        <end position="137"/>
    </location>
    <ligand>
        <name>S-adenosyl-L-methionine</name>
        <dbReference type="ChEBI" id="CHEBI:59789"/>
    </ligand>
</feature>
<name>TRMD_ACAM1</name>
<protein>
    <recommendedName>
        <fullName evidence="1">tRNA (guanine-N(1)-)-methyltransferase</fullName>
        <ecNumber evidence="1">2.1.1.228</ecNumber>
    </recommendedName>
    <alternativeName>
        <fullName evidence="1">M1G-methyltransferase</fullName>
    </alternativeName>
    <alternativeName>
        <fullName evidence="1">tRNA [GM37] methyltransferase</fullName>
    </alternativeName>
</protein>
<reference key="1">
    <citation type="journal article" date="2008" name="Proc. Natl. Acad. Sci. U.S.A.">
        <title>Niche adaptation and genome expansion in the chlorophyll d-producing cyanobacterium Acaryochloris marina.</title>
        <authorList>
            <person name="Swingley W.D."/>
            <person name="Chen M."/>
            <person name="Cheung P.C."/>
            <person name="Conrad A.L."/>
            <person name="Dejesa L.C."/>
            <person name="Hao J."/>
            <person name="Honchak B.M."/>
            <person name="Karbach L.E."/>
            <person name="Kurdoglu A."/>
            <person name="Lahiri S."/>
            <person name="Mastrian S.D."/>
            <person name="Miyashita H."/>
            <person name="Page L."/>
            <person name="Ramakrishna P."/>
            <person name="Satoh S."/>
            <person name="Sattley W.M."/>
            <person name="Shimada Y."/>
            <person name="Taylor H.L."/>
            <person name="Tomo T."/>
            <person name="Tsuchiya T."/>
            <person name="Wang Z.T."/>
            <person name="Raymond J."/>
            <person name="Mimuro M."/>
            <person name="Blankenship R.E."/>
            <person name="Touchman J.W."/>
        </authorList>
    </citation>
    <scope>NUCLEOTIDE SEQUENCE [LARGE SCALE GENOMIC DNA]</scope>
    <source>
        <strain>MBIC 11017</strain>
    </source>
</reference>
<accession>B0CAM2</accession>
<organism>
    <name type="scientific">Acaryochloris marina (strain MBIC 11017)</name>
    <dbReference type="NCBI Taxonomy" id="329726"/>
    <lineage>
        <taxon>Bacteria</taxon>
        <taxon>Bacillati</taxon>
        <taxon>Cyanobacteriota</taxon>
        <taxon>Cyanophyceae</taxon>
        <taxon>Acaryochloridales</taxon>
        <taxon>Acaryochloridaceae</taxon>
        <taxon>Acaryochloris</taxon>
    </lineage>
</organism>
<sequence length="235" mass="26980">MRFDILTLFPEFFTSPLQTSLLGKALANEVAEVHLTNPRDFTTDKHHRVDDEVYGGGVGMLMKPEPIFAAVESLPCLPRRQIVLFTPQGRPMDQPLFHELANHYDQLVMICGHYEGVDERVAEHLVTQELSLGDFVLTCGEIPALTLLNGVIRLRPGTVGKVESLKKESFETELLDYPQYTRPAEFRGWQVPSVLRSGNHALIERWRQEQQIQRTRDRRPDLYQKWLKKSDTSDP</sequence>
<keyword id="KW-0963">Cytoplasm</keyword>
<keyword id="KW-0489">Methyltransferase</keyword>
<keyword id="KW-1185">Reference proteome</keyword>
<keyword id="KW-0949">S-adenosyl-L-methionine</keyword>
<keyword id="KW-0808">Transferase</keyword>
<keyword id="KW-0819">tRNA processing</keyword>
<evidence type="ECO:0000255" key="1">
    <source>
        <dbReference type="HAMAP-Rule" id="MF_00605"/>
    </source>
</evidence>
<gene>
    <name evidence="1" type="primary">trmD</name>
    <name type="ordered locus">AM1_4106</name>
</gene>
<proteinExistence type="inferred from homology"/>